<name>NEU2_LOXAF</name>
<proteinExistence type="evidence at protein level"/>
<sequence length="92" mass="9543">AMSDMELRQCLPCGPGGKGRCFGPSICCGEELGCFVGTAEALRCQEENYLPSPCQSGQKPCGSGGRCAAAGICCYEESCVTEPECREGAGIH</sequence>
<accession>P81768</accession>
<comment type="function">
    <text>Neurophysin 2 specifically binds vasopressin.</text>
</comment>
<comment type="subunit">
    <text>There is an equilibrium between the monomeric and dimeric forms. On peptide binding the dimeric form predominates.</text>
</comment>
<comment type="subcellular location">
    <subcellularLocation>
        <location>Secreted</location>
    </subcellularLocation>
</comment>
<comment type="PTM">
    <text>A shorter neurophysin molecule (1-90) also exists and is probably derived from the complete protein by proteolytic degradation (in vivo or after extraction).</text>
</comment>
<comment type="similarity">
    <text evidence="2">Belongs to the vasopressin/oxytocin family.</text>
</comment>
<gene>
    <name type="primary">AVP</name>
</gene>
<protein>
    <recommendedName>
        <fullName>Neurophysin 2</fullName>
    </recommendedName>
    <alternativeName>
        <fullName>E-NP</fullName>
    </alternativeName>
    <alternativeName>
        <fullName>Neurophysin-II</fullName>
    </alternativeName>
</protein>
<keyword id="KW-0903">Direct protein sequencing</keyword>
<keyword id="KW-1015">Disulfide bond</keyword>
<keyword id="KW-1185">Reference proteome</keyword>
<keyword id="KW-0964">Secreted</keyword>
<reference key="1">
    <citation type="journal article" date="1994" name="Int. J. Pept. Protein Res.">
        <title>Amino acid sequence and properties of vasopressin-associated elephant neurophysin.</title>
        <authorList>
            <person name="Huang H.-B."/>
            <person name="Wellner D."/>
            <person name="Naude R."/>
            <person name="Oelofsen W."/>
            <person name="Oosthuizen M.M.J."/>
            <person name="Breslow E."/>
        </authorList>
    </citation>
    <scope>PROTEIN SEQUENCE</scope>
    <source>
        <tissue>Posterior pituitary</tissue>
    </source>
</reference>
<organism>
    <name type="scientific">Loxodonta africana</name>
    <name type="common">African elephant</name>
    <dbReference type="NCBI Taxonomy" id="9785"/>
    <lineage>
        <taxon>Eukaryota</taxon>
        <taxon>Metazoa</taxon>
        <taxon>Chordata</taxon>
        <taxon>Craniata</taxon>
        <taxon>Vertebrata</taxon>
        <taxon>Euteleostomi</taxon>
        <taxon>Mammalia</taxon>
        <taxon>Eutheria</taxon>
        <taxon>Afrotheria</taxon>
        <taxon>Proboscidea</taxon>
        <taxon>Elephantidae</taxon>
        <taxon>Loxodonta</taxon>
    </lineage>
</organism>
<evidence type="ECO:0000250" key="1">
    <source>
        <dbReference type="UniProtKB" id="P01175"/>
    </source>
</evidence>
<evidence type="ECO:0000305" key="2"/>
<dbReference type="SMR" id="P81768"/>
<dbReference type="STRING" id="9785.ENSLAFP00000005943"/>
<dbReference type="eggNOG" id="ENOG502S21K">
    <property type="taxonomic scope" value="Eukaryota"/>
</dbReference>
<dbReference type="InParanoid" id="P81768"/>
<dbReference type="Proteomes" id="UP000007646">
    <property type="component" value="Unassembled WGS sequence"/>
</dbReference>
<dbReference type="GO" id="GO:0005615">
    <property type="term" value="C:extracellular space"/>
    <property type="evidence" value="ECO:0007669"/>
    <property type="project" value="TreeGrafter"/>
</dbReference>
<dbReference type="GO" id="GO:0030141">
    <property type="term" value="C:secretory granule"/>
    <property type="evidence" value="ECO:0007669"/>
    <property type="project" value="TreeGrafter"/>
</dbReference>
<dbReference type="GO" id="GO:0005185">
    <property type="term" value="F:neurohypophyseal hormone activity"/>
    <property type="evidence" value="ECO:0007669"/>
    <property type="project" value="InterPro"/>
</dbReference>
<dbReference type="GO" id="GO:0031894">
    <property type="term" value="F:V1A vasopressin receptor binding"/>
    <property type="evidence" value="ECO:0007669"/>
    <property type="project" value="TreeGrafter"/>
</dbReference>
<dbReference type="FunFam" id="2.60.9.10:FF:000001">
    <property type="entry name" value="oxytocin-neurophysin 1"/>
    <property type="match status" value="1"/>
</dbReference>
<dbReference type="Gene3D" id="2.60.9.10">
    <property type="entry name" value="Neurohypophysial hormone domain"/>
    <property type="match status" value="1"/>
</dbReference>
<dbReference type="InterPro" id="IPR000981">
    <property type="entry name" value="Neurhyp_horm"/>
</dbReference>
<dbReference type="InterPro" id="IPR036387">
    <property type="entry name" value="Neurhyp_horm_dom_sf"/>
</dbReference>
<dbReference type="PANTHER" id="PTHR11681">
    <property type="entry name" value="NEUROPHYSIN"/>
    <property type="match status" value="1"/>
</dbReference>
<dbReference type="PANTHER" id="PTHR11681:SF9">
    <property type="entry name" value="VASOPRESSIN-NEUROPHYSIN 2-COPEPTIN"/>
    <property type="match status" value="1"/>
</dbReference>
<dbReference type="Pfam" id="PF00184">
    <property type="entry name" value="Hormone_5"/>
    <property type="match status" value="1"/>
</dbReference>
<dbReference type="PRINTS" id="PR00831">
    <property type="entry name" value="NEUROPHYSIN"/>
</dbReference>
<dbReference type="SMART" id="SM00003">
    <property type="entry name" value="NH"/>
    <property type="match status" value="1"/>
</dbReference>
<dbReference type="SUPFAM" id="SSF49606">
    <property type="entry name" value="Neurophysin II"/>
    <property type="match status" value="1"/>
</dbReference>
<feature type="chain" id="PRO_0000160937" description="Neurophysin 2">
    <location>
        <begin position="1"/>
        <end position="92"/>
    </location>
</feature>
<feature type="disulfide bond" evidence="1">
    <location>
        <begin position="10"/>
        <end position="54"/>
    </location>
</feature>
<feature type="disulfide bond" evidence="1">
    <location>
        <begin position="13"/>
        <end position="27"/>
    </location>
</feature>
<feature type="disulfide bond" evidence="1">
    <location>
        <begin position="21"/>
        <end position="44"/>
    </location>
</feature>
<feature type="disulfide bond" evidence="1">
    <location>
        <begin position="28"/>
        <end position="34"/>
    </location>
</feature>
<feature type="disulfide bond" evidence="1">
    <location>
        <begin position="61"/>
        <end position="73"/>
    </location>
</feature>
<feature type="disulfide bond" evidence="1">
    <location>
        <begin position="67"/>
        <end position="85"/>
    </location>
</feature>
<feature type="disulfide bond" evidence="1">
    <location>
        <begin position="74"/>
        <end position="79"/>
    </location>
</feature>